<reference key="1">
    <citation type="journal article" date="2016" name="Genome Announc.">
        <title>Complete genome sequence of Alkaliphilus metalliredigens strain QYMF, an alkaliphilic and metal-reducing bacterium isolated from borax-contaminated leachate ponds.</title>
        <authorList>
            <person name="Hwang C."/>
            <person name="Copeland A."/>
            <person name="Lucas S."/>
            <person name="Lapidus A."/>
            <person name="Barry K."/>
            <person name="Detter J.C."/>
            <person name="Glavina Del Rio T."/>
            <person name="Hammon N."/>
            <person name="Israni S."/>
            <person name="Dalin E."/>
            <person name="Tice H."/>
            <person name="Pitluck S."/>
            <person name="Chertkov O."/>
            <person name="Brettin T."/>
            <person name="Bruce D."/>
            <person name="Han C."/>
            <person name="Schmutz J."/>
            <person name="Larimer F."/>
            <person name="Land M.L."/>
            <person name="Hauser L."/>
            <person name="Kyrpides N."/>
            <person name="Mikhailova N."/>
            <person name="Ye Q."/>
            <person name="Zhou J."/>
            <person name="Richardson P."/>
            <person name="Fields M.W."/>
        </authorList>
    </citation>
    <scope>NUCLEOTIDE SEQUENCE [LARGE SCALE GENOMIC DNA]</scope>
    <source>
        <strain>QYMF</strain>
    </source>
</reference>
<name>RL7_ALKMQ</name>
<keyword id="KW-1185">Reference proteome</keyword>
<keyword id="KW-0687">Ribonucleoprotein</keyword>
<keyword id="KW-0689">Ribosomal protein</keyword>
<dbReference type="EMBL" id="CP000724">
    <property type="protein sequence ID" value="ABR50559.1"/>
    <property type="molecule type" value="Genomic_DNA"/>
</dbReference>
<dbReference type="RefSeq" id="WP_012065450.1">
    <property type="nucleotide sequence ID" value="NC_009633.1"/>
</dbReference>
<dbReference type="SMR" id="A6TWJ1"/>
<dbReference type="STRING" id="293826.Amet_4487"/>
<dbReference type="KEGG" id="amt:Amet_4487"/>
<dbReference type="eggNOG" id="COG0222">
    <property type="taxonomic scope" value="Bacteria"/>
</dbReference>
<dbReference type="HOGENOM" id="CLU_086499_3_2_9"/>
<dbReference type="OrthoDB" id="9811748at2"/>
<dbReference type="Proteomes" id="UP000001572">
    <property type="component" value="Chromosome"/>
</dbReference>
<dbReference type="GO" id="GO:0022625">
    <property type="term" value="C:cytosolic large ribosomal subunit"/>
    <property type="evidence" value="ECO:0007669"/>
    <property type="project" value="TreeGrafter"/>
</dbReference>
<dbReference type="GO" id="GO:0003729">
    <property type="term" value="F:mRNA binding"/>
    <property type="evidence" value="ECO:0007669"/>
    <property type="project" value="TreeGrafter"/>
</dbReference>
<dbReference type="GO" id="GO:0003735">
    <property type="term" value="F:structural constituent of ribosome"/>
    <property type="evidence" value="ECO:0007669"/>
    <property type="project" value="InterPro"/>
</dbReference>
<dbReference type="GO" id="GO:0006412">
    <property type="term" value="P:translation"/>
    <property type="evidence" value="ECO:0007669"/>
    <property type="project" value="UniProtKB-UniRule"/>
</dbReference>
<dbReference type="CDD" id="cd00387">
    <property type="entry name" value="Ribosomal_L7_L12"/>
    <property type="match status" value="1"/>
</dbReference>
<dbReference type="FunFam" id="3.30.1390.10:FF:000001">
    <property type="entry name" value="50S ribosomal protein L7/L12"/>
    <property type="match status" value="1"/>
</dbReference>
<dbReference type="Gene3D" id="3.30.1390.10">
    <property type="match status" value="1"/>
</dbReference>
<dbReference type="Gene3D" id="1.20.5.710">
    <property type="entry name" value="Single helix bin"/>
    <property type="match status" value="1"/>
</dbReference>
<dbReference type="HAMAP" id="MF_00368">
    <property type="entry name" value="Ribosomal_bL12"/>
    <property type="match status" value="1"/>
</dbReference>
<dbReference type="InterPro" id="IPR000206">
    <property type="entry name" value="Ribosomal_bL12"/>
</dbReference>
<dbReference type="InterPro" id="IPR013823">
    <property type="entry name" value="Ribosomal_bL12_C"/>
</dbReference>
<dbReference type="InterPro" id="IPR014719">
    <property type="entry name" value="Ribosomal_bL12_C/ClpS-like"/>
</dbReference>
<dbReference type="InterPro" id="IPR008932">
    <property type="entry name" value="Ribosomal_bL12_oligo"/>
</dbReference>
<dbReference type="InterPro" id="IPR036235">
    <property type="entry name" value="Ribosomal_bL12_oligo_N_sf"/>
</dbReference>
<dbReference type="NCBIfam" id="TIGR00855">
    <property type="entry name" value="L12"/>
    <property type="match status" value="1"/>
</dbReference>
<dbReference type="PANTHER" id="PTHR45987">
    <property type="entry name" value="39S RIBOSOMAL PROTEIN L12"/>
    <property type="match status" value="1"/>
</dbReference>
<dbReference type="PANTHER" id="PTHR45987:SF4">
    <property type="entry name" value="LARGE RIBOSOMAL SUBUNIT PROTEIN BL12M"/>
    <property type="match status" value="1"/>
</dbReference>
<dbReference type="Pfam" id="PF00542">
    <property type="entry name" value="Ribosomal_L12"/>
    <property type="match status" value="1"/>
</dbReference>
<dbReference type="Pfam" id="PF16320">
    <property type="entry name" value="Ribosomal_L12_N"/>
    <property type="match status" value="1"/>
</dbReference>
<dbReference type="SUPFAM" id="SSF54736">
    <property type="entry name" value="ClpS-like"/>
    <property type="match status" value="1"/>
</dbReference>
<dbReference type="SUPFAM" id="SSF48300">
    <property type="entry name" value="Ribosomal protein L7/12, oligomerisation (N-terminal) domain"/>
    <property type="match status" value="1"/>
</dbReference>
<accession>A6TWJ1</accession>
<feature type="chain" id="PRO_1000059919" description="Large ribosomal subunit protein bL12">
    <location>
        <begin position="1"/>
        <end position="120"/>
    </location>
</feature>
<proteinExistence type="inferred from homology"/>
<protein>
    <recommendedName>
        <fullName evidence="1">Large ribosomal subunit protein bL12</fullName>
    </recommendedName>
    <alternativeName>
        <fullName evidence="2">50S ribosomal protein L7/L12</fullName>
    </alternativeName>
</protein>
<gene>
    <name evidence="1" type="primary">rplL</name>
    <name type="ordered locus">Amet_4487</name>
</gene>
<sequence>MTIEQILETIENMKVLELNELVKAAEEKFGVSASAAVVVGAAAGGAVEEEQTEFDVILDNAGSSKINVIKAVREITGLGLKEAKGVVDEAPKAIKEAISKEDAEAIKAKLEEAGASVTLK</sequence>
<evidence type="ECO:0000255" key="1">
    <source>
        <dbReference type="HAMAP-Rule" id="MF_00368"/>
    </source>
</evidence>
<evidence type="ECO:0000305" key="2"/>
<organism>
    <name type="scientific">Alkaliphilus metalliredigens (strain QYMF)</name>
    <dbReference type="NCBI Taxonomy" id="293826"/>
    <lineage>
        <taxon>Bacteria</taxon>
        <taxon>Bacillati</taxon>
        <taxon>Bacillota</taxon>
        <taxon>Clostridia</taxon>
        <taxon>Peptostreptococcales</taxon>
        <taxon>Natronincolaceae</taxon>
        <taxon>Alkaliphilus</taxon>
    </lineage>
</organism>
<comment type="function">
    <text evidence="1">Forms part of the ribosomal stalk which helps the ribosome interact with GTP-bound translation factors. Is thus essential for accurate translation.</text>
</comment>
<comment type="subunit">
    <text evidence="1">Homodimer. Part of the ribosomal stalk of the 50S ribosomal subunit. Forms a multimeric L10(L12)X complex, where L10 forms an elongated spine to which 2 to 4 L12 dimers bind in a sequential fashion. Binds GTP-bound translation factors.</text>
</comment>
<comment type="similarity">
    <text evidence="1">Belongs to the bacterial ribosomal protein bL12 family.</text>
</comment>